<keyword id="KW-0687">Ribonucleoprotein</keyword>
<keyword id="KW-0689">Ribosomal protein</keyword>
<keyword id="KW-0694">RNA-binding</keyword>
<keyword id="KW-0699">rRNA-binding</keyword>
<protein>
    <recommendedName>
        <fullName evidence="1">Large ribosomal subunit protein uL4</fullName>
    </recommendedName>
    <alternativeName>
        <fullName evidence="3">50S ribosomal protein L4</fullName>
    </alternativeName>
</protein>
<sequence>MAKVSLFKQDGSQAGEVTLNDSVFGIEPNESVVFDVVISQRASLRQGTHAHKNRSAVSGGGKKPWRQKGTGRARQGSTRSPQWRGGGTVFGPNPRSYAYKLPQKVRQLALKSVYSTKVADGKLIAVDTLDFAAPKTAEFAKVISALSIERKVLVVLPNEGNEFAELSARNLENVKVTTANSASVLDIVSADKLLVVQSALTQIEEVLA</sequence>
<reference key="1">
    <citation type="journal article" date="2006" name="Proc. Natl. Acad. Sci. U.S.A.">
        <title>Comparative genomics of the lactic acid bacteria.</title>
        <authorList>
            <person name="Makarova K.S."/>
            <person name="Slesarev A."/>
            <person name="Wolf Y.I."/>
            <person name="Sorokin A."/>
            <person name="Mirkin B."/>
            <person name="Koonin E.V."/>
            <person name="Pavlov A."/>
            <person name="Pavlova N."/>
            <person name="Karamychev V."/>
            <person name="Polouchine N."/>
            <person name="Shakhova V."/>
            <person name="Grigoriev I."/>
            <person name="Lou Y."/>
            <person name="Rohksar D."/>
            <person name="Lucas S."/>
            <person name="Huang K."/>
            <person name="Goodstein D.M."/>
            <person name="Hawkins T."/>
            <person name="Plengvidhya V."/>
            <person name="Welker D."/>
            <person name="Hughes J."/>
            <person name="Goh Y."/>
            <person name="Benson A."/>
            <person name="Baldwin K."/>
            <person name="Lee J.-H."/>
            <person name="Diaz-Muniz I."/>
            <person name="Dosti B."/>
            <person name="Smeianov V."/>
            <person name="Wechter W."/>
            <person name="Barabote R."/>
            <person name="Lorca G."/>
            <person name="Altermann E."/>
            <person name="Barrangou R."/>
            <person name="Ganesan B."/>
            <person name="Xie Y."/>
            <person name="Rawsthorne H."/>
            <person name="Tamir D."/>
            <person name="Parker C."/>
            <person name="Breidt F."/>
            <person name="Broadbent J.R."/>
            <person name="Hutkins R."/>
            <person name="O'Sullivan D."/>
            <person name="Steele J."/>
            <person name="Unlu G."/>
            <person name="Saier M.H. Jr."/>
            <person name="Klaenhammer T."/>
            <person name="Richardson P."/>
            <person name="Kozyavkin S."/>
            <person name="Weimer B.C."/>
            <person name="Mills D.A."/>
        </authorList>
    </citation>
    <scope>NUCLEOTIDE SEQUENCE [LARGE SCALE GENOMIC DNA]</scope>
    <source>
        <strain>SK11</strain>
    </source>
</reference>
<proteinExistence type="inferred from homology"/>
<name>RL4_LACLS</name>
<feature type="chain" id="PRO_1000052426" description="Large ribosomal subunit protein uL4">
    <location>
        <begin position="1"/>
        <end position="208"/>
    </location>
</feature>
<feature type="region of interest" description="Disordered" evidence="2">
    <location>
        <begin position="45"/>
        <end position="89"/>
    </location>
</feature>
<accession>Q02W25</accession>
<comment type="function">
    <text evidence="1">One of the primary rRNA binding proteins, this protein initially binds near the 5'-end of the 23S rRNA. It is important during the early stages of 50S assembly. It makes multiple contacts with different domains of the 23S rRNA in the assembled 50S subunit and ribosome.</text>
</comment>
<comment type="function">
    <text evidence="1">Forms part of the polypeptide exit tunnel.</text>
</comment>
<comment type="subunit">
    <text evidence="1">Part of the 50S ribosomal subunit.</text>
</comment>
<comment type="similarity">
    <text evidence="1">Belongs to the universal ribosomal protein uL4 family.</text>
</comment>
<gene>
    <name evidence="1" type="primary">rplD</name>
    <name type="ordered locus">LACR_2401</name>
</gene>
<dbReference type="EMBL" id="CP000425">
    <property type="protein sequence ID" value="ABJ73847.1"/>
    <property type="molecule type" value="Genomic_DNA"/>
</dbReference>
<dbReference type="RefSeq" id="WP_011677162.1">
    <property type="nucleotide sequence ID" value="NC_008527.1"/>
</dbReference>
<dbReference type="SMR" id="Q02W25"/>
<dbReference type="GeneID" id="61110426"/>
<dbReference type="KEGG" id="llc:LACR_2401"/>
<dbReference type="HOGENOM" id="CLU_041575_5_2_9"/>
<dbReference type="Proteomes" id="UP000000240">
    <property type="component" value="Chromosome"/>
</dbReference>
<dbReference type="GO" id="GO:1990904">
    <property type="term" value="C:ribonucleoprotein complex"/>
    <property type="evidence" value="ECO:0007669"/>
    <property type="project" value="UniProtKB-KW"/>
</dbReference>
<dbReference type="GO" id="GO:0005840">
    <property type="term" value="C:ribosome"/>
    <property type="evidence" value="ECO:0007669"/>
    <property type="project" value="UniProtKB-KW"/>
</dbReference>
<dbReference type="GO" id="GO:0019843">
    <property type="term" value="F:rRNA binding"/>
    <property type="evidence" value="ECO:0007669"/>
    <property type="project" value="UniProtKB-UniRule"/>
</dbReference>
<dbReference type="GO" id="GO:0003735">
    <property type="term" value="F:structural constituent of ribosome"/>
    <property type="evidence" value="ECO:0007669"/>
    <property type="project" value="InterPro"/>
</dbReference>
<dbReference type="GO" id="GO:0006412">
    <property type="term" value="P:translation"/>
    <property type="evidence" value="ECO:0007669"/>
    <property type="project" value="UniProtKB-UniRule"/>
</dbReference>
<dbReference type="FunFam" id="3.40.1370.10:FF:000003">
    <property type="entry name" value="50S ribosomal protein L4"/>
    <property type="match status" value="1"/>
</dbReference>
<dbReference type="Gene3D" id="3.40.1370.10">
    <property type="match status" value="1"/>
</dbReference>
<dbReference type="HAMAP" id="MF_01328_B">
    <property type="entry name" value="Ribosomal_uL4_B"/>
    <property type="match status" value="1"/>
</dbReference>
<dbReference type="InterPro" id="IPR002136">
    <property type="entry name" value="Ribosomal_uL4"/>
</dbReference>
<dbReference type="InterPro" id="IPR013005">
    <property type="entry name" value="Ribosomal_uL4-like"/>
</dbReference>
<dbReference type="InterPro" id="IPR023574">
    <property type="entry name" value="Ribosomal_uL4_dom_sf"/>
</dbReference>
<dbReference type="NCBIfam" id="TIGR03953">
    <property type="entry name" value="rplD_bact"/>
    <property type="match status" value="1"/>
</dbReference>
<dbReference type="PANTHER" id="PTHR10746">
    <property type="entry name" value="50S RIBOSOMAL PROTEIN L4"/>
    <property type="match status" value="1"/>
</dbReference>
<dbReference type="PANTHER" id="PTHR10746:SF6">
    <property type="entry name" value="LARGE RIBOSOMAL SUBUNIT PROTEIN UL4M"/>
    <property type="match status" value="1"/>
</dbReference>
<dbReference type="Pfam" id="PF00573">
    <property type="entry name" value="Ribosomal_L4"/>
    <property type="match status" value="1"/>
</dbReference>
<dbReference type="SUPFAM" id="SSF52166">
    <property type="entry name" value="Ribosomal protein L4"/>
    <property type="match status" value="1"/>
</dbReference>
<organism>
    <name type="scientific">Lactococcus lactis subsp. cremoris (strain SK11)</name>
    <dbReference type="NCBI Taxonomy" id="272622"/>
    <lineage>
        <taxon>Bacteria</taxon>
        <taxon>Bacillati</taxon>
        <taxon>Bacillota</taxon>
        <taxon>Bacilli</taxon>
        <taxon>Lactobacillales</taxon>
        <taxon>Streptococcaceae</taxon>
        <taxon>Lactococcus</taxon>
        <taxon>Lactococcus cremoris subsp. cremoris</taxon>
    </lineage>
</organism>
<evidence type="ECO:0000255" key="1">
    <source>
        <dbReference type="HAMAP-Rule" id="MF_01328"/>
    </source>
</evidence>
<evidence type="ECO:0000256" key="2">
    <source>
        <dbReference type="SAM" id="MobiDB-lite"/>
    </source>
</evidence>
<evidence type="ECO:0000305" key="3"/>